<accession>P32202</accession>
<feature type="chain" id="PRO_0000059699" description="UDP-3-O-acylglucosamine N-acyltransferase">
    <location>
        <begin position="1"/>
        <end position="345"/>
    </location>
</feature>
<feature type="active site" description="Proton acceptor" evidence="1">
    <location>
        <position position="252"/>
    </location>
</feature>
<organism>
    <name type="scientific">Rickettsia rickettsii</name>
    <dbReference type="NCBI Taxonomy" id="783"/>
    <lineage>
        <taxon>Bacteria</taxon>
        <taxon>Pseudomonadati</taxon>
        <taxon>Pseudomonadota</taxon>
        <taxon>Alphaproteobacteria</taxon>
        <taxon>Rickettsiales</taxon>
        <taxon>Rickettsiaceae</taxon>
        <taxon>Rickettsieae</taxon>
        <taxon>Rickettsia</taxon>
        <taxon>spotted fever group</taxon>
    </lineage>
</organism>
<dbReference type="EC" id="2.3.1.191" evidence="1"/>
<dbReference type="EMBL" id="L22690">
    <property type="protein sequence ID" value="AAA26384.1"/>
    <property type="molecule type" value="Genomic_DNA"/>
</dbReference>
<dbReference type="RefSeq" id="WP_012150232.1">
    <property type="nucleotide sequence ID" value="NZ_CP114277.2"/>
</dbReference>
<dbReference type="SMR" id="P32202"/>
<dbReference type="GeneID" id="79936822"/>
<dbReference type="OMA" id="PAMEIHE"/>
<dbReference type="UniPathway" id="UPA00973"/>
<dbReference type="GO" id="GO:0016020">
    <property type="term" value="C:membrane"/>
    <property type="evidence" value="ECO:0007669"/>
    <property type="project" value="GOC"/>
</dbReference>
<dbReference type="GO" id="GO:0016410">
    <property type="term" value="F:N-acyltransferase activity"/>
    <property type="evidence" value="ECO:0007669"/>
    <property type="project" value="InterPro"/>
</dbReference>
<dbReference type="GO" id="GO:0009245">
    <property type="term" value="P:lipid A biosynthetic process"/>
    <property type="evidence" value="ECO:0007669"/>
    <property type="project" value="UniProtKB-UniRule"/>
</dbReference>
<dbReference type="CDD" id="cd03352">
    <property type="entry name" value="LbH_LpxD"/>
    <property type="match status" value="1"/>
</dbReference>
<dbReference type="Gene3D" id="2.160.10.10">
    <property type="entry name" value="Hexapeptide repeat proteins"/>
    <property type="match status" value="1"/>
</dbReference>
<dbReference type="Gene3D" id="3.40.1390.10">
    <property type="entry name" value="MurE/MurF, N-terminal domain"/>
    <property type="match status" value="1"/>
</dbReference>
<dbReference type="HAMAP" id="MF_00523">
    <property type="entry name" value="LpxD"/>
    <property type="match status" value="1"/>
</dbReference>
<dbReference type="InterPro" id="IPR001451">
    <property type="entry name" value="Hexapep"/>
</dbReference>
<dbReference type="InterPro" id="IPR018357">
    <property type="entry name" value="Hexapep_transf_CS"/>
</dbReference>
<dbReference type="InterPro" id="IPR007691">
    <property type="entry name" value="LpxD"/>
</dbReference>
<dbReference type="InterPro" id="IPR011004">
    <property type="entry name" value="Trimer_LpxA-like_sf"/>
</dbReference>
<dbReference type="InterPro" id="IPR020573">
    <property type="entry name" value="UDP_GlcNAc_AcTrfase_non-rep"/>
</dbReference>
<dbReference type="NCBIfam" id="TIGR01853">
    <property type="entry name" value="lipid_A_lpxD"/>
    <property type="match status" value="1"/>
</dbReference>
<dbReference type="NCBIfam" id="NF002060">
    <property type="entry name" value="PRK00892.1"/>
    <property type="match status" value="1"/>
</dbReference>
<dbReference type="PANTHER" id="PTHR43378">
    <property type="entry name" value="UDP-3-O-ACYLGLUCOSAMINE N-ACYLTRANSFERASE"/>
    <property type="match status" value="1"/>
</dbReference>
<dbReference type="PANTHER" id="PTHR43378:SF2">
    <property type="entry name" value="UDP-3-O-ACYLGLUCOSAMINE N-ACYLTRANSFERASE 1, MITOCHONDRIAL-RELATED"/>
    <property type="match status" value="1"/>
</dbReference>
<dbReference type="Pfam" id="PF00132">
    <property type="entry name" value="Hexapep"/>
    <property type="match status" value="1"/>
</dbReference>
<dbReference type="Pfam" id="PF04613">
    <property type="entry name" value="LpxD"/>
    <property type="match status" value="1"/>
</dbReference>
<dbReference type="SUPFAM" id="SSF51161">
    <property type="entry name" value="Trimeric LpxA-like enzymes"/>
    <property type="match status" value="1"/>
</dbReference>
<dbReference type="PROSITE" id="PS00101">
    <property type="entry name" value="HEXAPEP_TRANSFERASES"/>
    <property type="match status" value="2"/>
</dbReference>
<name>LPXD_RICRI</name>
<proteinExistence type="inferred from homology"/>
<comment type="function">
    <text evidence="1">Catalyzes the N-acylation of UDP-3-O-acylglucosamine using 3-hydroxyacyl-ACP as the acyl donor. Is involved in the biosynthesis of lipid A, a phosphorylated glycolipid that anchors the lipopolysaccharide to the outer membrane of the cell.</text>
</comment>
<comment type="catalytic activity">
    <reaction evidence="1">
        <text>a UDP-3-O-[(3R)-3-hydroxyacyl]-alpha-D-glucosamine + a (3R)-hydroxyacyl-[ACP] = a UDP-2-N,3-O-bis[(3R)-3-hydroxyacyl]-alpha-D-glucosamine + holo-[ACP] + H(+)</text>
        <dbReference type="Rhea" id="RHEA:53836"/>
        <dbReference type="Rhea" id="RHEA-COMP:9685"/>
        <dbReference type="Rhea" id="RHEA-COMP:9945"/>
        <dbReference type="ChEBI" id="CHEBI:15378"/>
        <dbReference type="ChEBI" id="CHEBI:64479"/>
        <dbReference type="ChEBI" id="CHEBI:78827"/>
        <dbReference type="ChEBI" id="CHEBI:137740"/>
        <dbReference type="ChEBI" id="CHEBI:137748"/>
        <dbReference type="EC" id="2.3.1.191"/>
    </reaction>
</comment>
<comment type="pathway">
    <text evidence="1">Bacterial outer membrane biogenesis; LPS lipid A biosynthesis.</text>
</comment>
<comment type="subunit">
    <text evidence="1">Homotrimer.</text>
</comment>
<comment type="similarity">
    <text evidence="1">Belongs to the transferase hexapeptide repeat family. LpxD subfamily.</text>
</comment>
<sequence length="345" mass="36794">MVSSNFYKNLGPRKLTAIIDFLHDIIAPPKIEDIAIHDIKILQEASPNDISFLSNPKYSEFLKTTKAAACIVPKNFTGEANPNTVLLHAQNSYFAYGKLIDFFYAPIKSYPTKIMKSAIVADSATIGKNCYIGHNVVIEDDVIIGDNSIIEAGSFIGRGVNIGRNARIEQHVSINYAIIGDDVVILAGAKIGQDGFGFSTEKGVHHKIFHIGIVKIGNNVEIGANTTIDRGSLQDTIIKDLCRIDNLVQIGHGVKIGKGSIIVAQTGIAGSSTIGKYCALGGQVGIAGHLNIGDGAQVAAQGGVAQNIEAGKIVGGSPAIPIMDWHRQSIIMKQLLKTSNSKLKK</sequence>
<protein>
    <recommendedName>
        <fullName evidence="1">UDP-3-O-acylglucosamine N-acyltransferase</fullName>
        <ecNumber evidence="1">2.3.1.191</ecNumber>
    </recommendedName>
</protein>
<keyword id="KW-0012">Acyltransferase</keyword>
<keyword id="KW-0441">Lipid A biosynthesis</keyword>
<keyword id="KW-0444">Lipid biosynthesis</keyword>
<keyword id="KW-0443">Lipid metabolism</keyword>
<keyword id="KW-0677">Repeat</keyword>
<keyword id="KW-0808">Transferase</keyword>
<evidence type="ECO:0000255" key="1">
    <source>
        <dbReference type="HAMAP-Rule" id="MF_00523"/>
    </source>
</evidence>
<gene>
    <name evidence="1" type="primary">lpxD</name>
    <name type="synonym">firA</name>
</gene>
<reference key="1">
    <citation type="journal article" date="1994" name="Gene">
        <title>Characterization of a Rickettsia rickettsii DNA fragment analogous to the fir A-ORF17-lpxA region of Escherichia coli.</title>
        <authorList>
            <person name="Shaw E.I."/>
            <person name="Wood D.O."/>
        </authorList>
    </citation>
    <scope>NUCLEOTIDE SEQUENCE [GENOMIC DNA]</scope>
</reference>